<geneLocation type="non-photosynthetic plastid"/>
<feature type="chain" id="PRO_0000217485" description="Uncharacterized 7.2 kDa protein in rps2-rps9 intergenic region">
    <location>
        <begin position="1"/>
        <end position="57"/>
    </location>
</feature>
<reference key="1">
    <citation type="journal article" date="1994" name="Curr. Genet.">
        <title>Genes for components of the chloroplast translational apparatus are conserved in the reduced 73-kb plastid DNA of the nonphotosynthetic euglenoid flagellate Astasia longa.</title>
        <authorList>
            <person name="Gockel G."/>
            <person name="Hachtel W."/>
            <person name="Baier S."/>
            <person name="Fliss C."/>
            <person name="Henke M."/>
        </authorList>
    </citation>
    <scope>NUCLEOTIDE SEQUENCE [GENOMIC DNA]</scope>
    <source>
        <strain>CCAP 1204-17a</strain>
    </source>
</reference>
<reference key="2">
    <citation type="journal article" date="2000" name="Protist">
        <title>Complete gene map of the plastid genome of the nonphotosynthetic euglenoid flagellate Astasia longa.</title>
        <authorList>
            <person name="Gockel G."/>
            <person name="Hachtel W."/>
        </authorList>
    </citation>
    <scope>NUCLEOTIDE SEQUENCE [LARGE SCALE GENOMIC DNA]</scope>
    <source>
        <strain>CCAP 1204-17a</strain>
    </source>
</reference>
<keyword id="KW-0934">Plastid</keyword>
<dbReference type="EMBL" id="AJ294725">
    <property type="protein sequence ID" value="CAC24581.1"/>
    <property type="molecule type" value="Genomic_DNA"/>
</dbReference>
<dbReference type="PIR" id="S38596">
    <property type="entry name" value="S38596"/>
</dbReference>
<dbReference type="RefSeq" id="NP_074970.1">
    <property type="nucleotide sequence ID" value="NC_002652.1"/>
</dbReference>
<dbReference type="SMR" id="P34774"/>
<dbReference type="GeneID" id="1457305"/>
<dbReference type="GO" id="GO:0009536">
    <property type="term" value="C:plastid"/>
    <property type="evidence" value="ECO:0007669"/>
    <property type="project" value="UniProtKB-SubCell"/>
</dbReference>
<proteinExistence type="predicted"/>
<sequence>MFYFRDFNMVVKQEEGSTLFFNMYKYILKKLKRFSLYIFNIIKYVIIFVVYLINKSF</sequence>
<protein>
    <recommendedName>
        <fullName>Uncharacterized 7.2 kDa protein in rps2-rps9 intergenic region</fullName>
    </recommendedName>
    <alternativeName>
        <fullName>ORF57</fullName>
    </alternativeName>
</protein>
<organism>
    <name type="scientific">Euglena longa</name>
    <name type="common">Euglenophycean alga</name>
    <name type="synonym">Astasia longa</name>
    <dbReference type="NCBI Taxonomy" id="3037"/>
    <lineage>
        <taxon>Eukaryota</taxon>
        <taxon>Discoba</taxon>
        <taxon>Euglenozoa</taxon>
        <taxon>Euglenida</taxon>
        <taxon>Spirocuta</taxon>
        <taxon>Euglenophyceae</taxon>
        <taxon>Euglenales</taxon>
        <taxon>Euglenaceae</taxon>
        <taxon>Euglena</taxon>
    </lineage>
</organism>
<comment type="subcellular location">
    <subcellularLocation>
        <location>Plastid</location>
    </subcellularLocation>
</comment>
<name>YCX1_EUGLO</name>
<accession>P34774</accession>